<comment type="function">
    <text evidence="13 18">The BBSome complex is thought to function as a coat complex required for sorting of specific membrane proteins to the primary cilia. The BBSome complex is required for ciliogenesis but is dispensable for centriolar satellite function. This ciliogenic function is mediated in part by the Rab8 GDP/GTP exchange factor, which localizes to the basal body and contacts the BBSome. Rab8(GTP) enters the primary cilium and promotes extension of the ciliary membrane. Firstly the BBSome associates with the ciliary membrane and binds to RAB3IP/Rabin8, the guanosyl exchange factor (GEF) for Rab8 and then the Rab8-GTP localizes to the cilium and promotes docking and fusion of carrier vesicles to the base of the ciliary membrane. The BBSome complex, together with the LTZL1, controls SMO ciliary trafficking and contributes to the sonic hedgehog (SHH) pathway regulation. Required for proper BBSome complex assembly and its ciliary localization.</text>
</comment>
<comment type="subunit">
    <text evidence="11 13 14 15 18 20">Part of BBSome complex, that contains BBS1, BBS2, BBS4, BBS5, BBS7, BBS8/TTC8, BBS9 and BBIP10. Interacts (via C-terminus) with BBS7. Interacts (via coiled coil domain) with MKKS. Interacts with CCDC28B and ALDOB. Interacts with DLEC1 (PubMed:33144677).</text>
</comment>
<comment type="interaction">
    <interactant intactId="EBI-748297">
        <id>Q9BXC9</id>
    </interactant>
    <interactant intactId="EBI-1045507">
        <id>P05062</id>
        <label>ALDOB</label>
    </interactant>
    <organismsDiffer>false</organismsDiffer>
    <experiments>4</experiments>
</comment>
<comment type="interaction">
    <interactant intactId="EBI-748297">
        <id>Q9BXC9</id>
    </interactant>
    <interactant intactId="EBI-1805484">
        <id>Q8NFJ9</id>
        <label>BBS1</label>
    </interactant>
    <organismsDiffer>false</organismsDiffer>
    <experiments>9</experiments>
</comment>
<comment type="interaction">
    <interactant intactId="EBI-748297">
        <id>Q9BXC9</id>
    </interactant>
    <interactant intactId="EBI-6128352">
        <id>Q6ZW61</id>
        <label>BBS12</label>
    </interactant>
    <organismsDiffer>false</organismsDiffer>
    <experiments>2</experiments>
</comment>
<comment type="interaction">
    <interactant intactId="EBI-748297">
        <id>Q9BXC9</id>
    </interactant>
    <interactant intactId="EBI-1806001">
        <id>Q8IWZ6</id>
        <label>BBS7</label>
    </interactant>
    <organismsDiffer>false</organismsDiffer>
    <experiments>16</experiments>
</comment>
<comment type="interaction">
    <interactant intactId="EBI-748297">
        <id>Q9BXC9</id>
    </interactant>
    <interactant intactId="EBI-20947190">
        <id>Q8IWZ6-2</id>
        <label>BBS7</label>
    </interactant>
    <organismsDiffer>false</organismsDiffer>
    <experiments>6</experiments>
</comment>
<comment type="interaction">
    <interactant intactId="EBI-748297">
        <id>Q9BXC9</id>
    </interactant>
    <interactant intactId="EBI-2826852">
        <id>Q3SYG4</id>
        <label>BBS9</label>
    </interactant>
    <organismsDiffer>false</organismsDiffer>
    <experiments>14</experiments>
</comment>
<comment type="interaction">
    <interactant intactId="EBI-748297">
        <id>Q9BXC9</id>
    </interactant>
    <interactant intactId="EBI-10242151">
        <id>Q53EP0-3</id>
        <label>FNDC3B</label>
    </interactant>
    <organismsDiffer>false</organismsDiffer>
    <experiments>3</experiments>
</comment>
<comment type="interaction">
    <interactant intactId="EBI-748297">
        <id>Q9BXC9</id>
    </interactant>
    <interactant intactId="EBI-352986">
        <id>P52597</id>
        <label>HNRNPF</label>
    </interactant>
    <organismsDiffer>false</organismsDiffer>
    <experiments>3</experiments>
</comment>
<comment type="interaction">
    <interactant intactId="EBI-748297">
        <id>Q9BXC9</id>
    </interactant>
    <interactant intactId="EBI-2805823">
        <id>Q15051</id>
        <label>IQCB1</label>
    </interactant>
    <organismsDiffer>false</organismsDiffer>
    <experiments>8</experiments>
</comment>
<comment type="interaction">
    <interactant intactId="EBI-748297">
        <id>Q9BXC9</id>
    </interactant>
    <interactant intactId="EBI-2798728">
        <id>P61968</id>
        <label>LMO4</label>
    </interactant>
    <organismsDiffer>false</organismsDiffer>
    <experiments>3</experiments>
</comment>
<comment type="interaction">
    <interactant intactId="EBI-748297">
        <id>Q9BXC9</id>
    </interactant>
    <interactant intactId="EBI-724076">
        <id>Q99750</id>
        <label>MDFI</label>
    </interactant>
    <organismsDiffer>false</organismsDiffer>
    <experiments>7</experiments>
</comment>
<comment type="interaction">
    <interactant intactId="EBI-748297">
        <id>Q9BXC9</id>
    </interactant>
    <interactant intactId="EBI-721319">
        <id>Q9NPJ1</id>
        <label>MKKS</label>
    </interactant>
    <organismsDiffer>false</organismsDiffer>
    <experiments>3</experiments>
</comment>
<comment type="interaction">
    <interactant intactId="EBI-748297">
        <id>Q9BXC9</id>
    </interactant>
    <interactant intactId="EBI-11742836">
        <id>Q16656-4</id>
        <label>NRF1</label>
    </interactant>
    <organismsDiffer>false</organismsDiffer>
    <experiments>3</experiments>
</comment>
<comment type="interaction">
    <interactant intactId="EBI-748297">
        <id>Q9BXC9</id>
    </interactant>
    <interactant intactId="EBI-355546">
        <id>P61289</id>
        <label>PSME3</label>
    </interactant>
    <organismsDiffer>false</organismsDiffer>
    <experiments>7</experiments>
</comment>
<comment type="interaction">
    <interactant intactId="EBI-748297">
        <id>Q9BXC9</id>
    </interactant>
    <interactant intactId="EBI-740322">
        <id>Q93062</id>
        <label>RBPMS</label>
    </interactant>
    <organismsDiffer>false</organismsDiffer>
    <experiments>3</experiments>
</comment>
<comment type="subcellular location">
    <subcellularLocation>
        <location>Cell projection</location>
        <location>Cilium membrane</location>
    </subcellularLocation>
    <subcellularLocation>
        <location>Cytoplasm</location>
    </subcellularLocation>
    <subcellularLocation>
        <location>Cytoplasm</location>
        <location>Cytoskeleton</location>
        <location>Microtubule organizing center</location>
        <location>Centrosome</location>
        <location>Centriolar satellite</location>
    </subcellularLocation>
</comment>
<comment type="tissue specificity">
    <text>Widely expressed.</text>
</comment>
<comment type="disease" evidence="2 3 4 5 6 9 12 17">
    <disease id="DI-00160">
        <name>Bardet-Biedl syndrome 2</name>
        <acronym>BBS2</acronym>
        <description>A syndrome characterized by usually severe pigmentary retinopathy, early-onset obesity, polydactyly, hypogenitalism, renal malformation and intellectual disability. Secondary features include diabetes mellitus, hypertension and congenital heart disease. Bardet-Biedl syndrome inheritance is autosomal recessive, but three mutated alleles (two at one locus, and a third at a second locus) may be required for clinical manifestation of some forms of the disease.</description>
        <dbReference type="MIM" id="615981"/>
    </disease>
    <text>The disease is caused by variants affecting the gene represented in this entry.</text>
</comment>
<comment type="disease" evidence="19">
    <disease id="DI-04520">
        <name>Retinitis pigmentosa 74</name>
        <acronym>RP74</acronym>
        <description>A retinal dystrophy belonging to the group of pigmentary retinopathies. Retinitis pigmentosa is characterized by retinal pigment deposits visible on fundus examination and primary loss of rod photoreceptor cells followed by secondary loss of cone photoreceptors. Patients typically have night vision blindness and loss of midperipheral visual field. As their condition progresses, they lose their far peripheral visual field and eventually central vision as well.</description>
        <dbReference type="MIM" id="616562"/>
    </disease>
    <text>The disease is caused by variants affecting the gene represented in this entry.</text>
</comment>
<feature type="chain" id="PRO_0000064843" description="BBSome complex member BBS2">
    <location>
        <begin position="1"/>
        <end position="721"/>
    </location>
</feature>
<feature type="coiled-coil region" evidence="1">
    <location>
        <begin position="325"/>
        <end position="369"/>
    </location>
</feature>
<feature type="sequence variant" id="VAR_038889" description="In BBS2." evidence="9">
    <original>R</original>
    <variation>P</variation>
    <location>
        <position position="23"/>
    </location>
</feature>
<feature type="sequence variant" id="VAR_075726" description="In RP74; dbSNP:rs797045155." evidence="19">
    <original>A</original>
    <variation>D</variation>
    <location>
        <position position="33"/>
    </location>
</feature>
<feature type="sequence variant" id="VAR_013162" description="In dbSNP:rs4784677." evidence="2 7 8">
    <original>S</original>
    <variation>N</variation>
    <location>
        <position position="70"/>
    </location>
</feature>
<feature type="sequence variant" id="VAR_013163" description="In BBS2; in linkage disequilibrium with V-123 in a Bedouin kindred; dbSNP:rs121908174." evidence="2">
    <original>V</original>
    <variation>G</variation>
    <location>
        <position position="75"/>
    </location>
</feature>
<feature type="sequence variant" id="VAR_066280" description="In BBS2; dbSNP:rs750506474." evidence="17">
    <original>G</original>
    <variation>C</variation>
    <location>
        <position position="81"/>
    </location>
</feature>
<feature type="sequence variant" id="VAR_013164" description="In BBS2 and RP74; dbSNP:rs121908179." evidence="3 17 19">
    <original>D</original>
    <variation>A</variation>
    <location>
        <position position="104"/>
    </location>
</feature>
<feature type="sequence variant" id="VAR_029747" description="In dbSNP:rs17856449." evidence="8">
    <original>A</original>
    <variation>V</variation>
    <location>
        <position position="122"/>
    </location>
</feature>
<feature type="sequence variant" id="VAR_013165" description="In dbSNP:rs11373." evidence="2 9 10">
    <original>I</original>
    <variation>V</variation>
    <location>
        <position position="123"/>
    </location>
</feature>
<feature type="sequence variant" id="VAR_066281" description="In BBS2." evidence="17">
    <original>L</original>
    <variation>R</variation>
    <location>
        <position position="125"/>
    </location>
</feature>
<feature type="sequence variant" id="VAR_075727" description="In RP74; dbSNP:rs376306240." evidence="19">
    <original>P</original>
    <variation>R</variation>
    <location>
        <position position="134"/>
    </location>
</feature>
<feature type="sequence variant" id="VAR_066282" description="In BBS2." evidence="17">
    <original>A</original>
    <variation>P</variation>
    <location>
        <position position="136"/>
    </location>
</feature>
<feature type="sequence variant" id="VAR_075728" description="In BBS2; dbSNP:rs121908181." evidence="12">
    <original>G</original>
    <variation>V</variation>
    <location>
        <position position="139"/>
    </location>
</feature>
<feature type="sequence variant" id="VAR_038890" description="In BBS2; dbSNP:rs767373822." evidence="5">
    <original>D</original>
    <variation>E</variation>
    <location>
        <position position="174"/>
    </location>
</feature>
<feature type="sequence variant" id="VAR_066283" description="In BBS2." evidence="17">
    <original>C</original>
    <variation>W</variation>
    <location>
        <position position="307"/>
    </location>
</feature>
<feature type="sequence variant" id="VAR_013166" description="In BBS2; dbSNP:rs544773389." evidence="3 4">
    <original>R</original>
    <variation>Q</variation>
    <location>
        <position position="315"/>
    </location>
</feature>
<feature type="sequence variant" id="VAR_013167" description="In BBS2; dbSNP:rs121908178." evidence="3">
    <original>R</original>
    <variation>W</variation>
    <location>
        <position position="315"/>
    </location>
</feature>
<feature type="sequence variant" id="VAR_066284" description="In BBS2; dbSNP:rs1597016660." evidence="17">
    <original>Y</original>
    <variation>C</variation>
    <location>
        <position position="317"/>
    </location>
</feature>
<feature type="sequence variant" id="VAR_038891" description="In BBS2; has a modifier effect on BBS; dbSNP:rs752280639." evidence="4">
    <original>L</original>
    <variation>W</variation>
    <location>
        <position position="349"/>
    </location>
</feature>
<feature type="sequence variant" id="VAR_029748" description="In dbSNP:rs16957538.">
    <original>A</original>
    <variation>V</variation>
    <location>
        <position position="504"/>
    </location>
</feature>
<feature type="sequence variant" id="VAR_013168" description="In BBS2; dbSNP:rs370581600." evidence="3">
    <original>T</original>
    <variation>I</variation>
    <location>
        <position position="558"/>
    </location>
</feature>
<feature type="sequence variant" id="VAR_066285" description="In a patient with Bardet-Biedl syndrome compound heterozygote for mutations in BBS10; uncertain significance; dbSNP:rs746505864." evidence="16">
    <original>E</original>
    <variation>K</variation>
    <location>
        <position position="629"/>
    </location>
</feature>
<feature type="sequence variant" id="VAR_013169" description="In BBS2 and RP74; dbSNP:rs138043021." evidence="3 17 19">
    <original>R</original>
    <variation>P</variation>
    <location>
        <position position="632"/>
    </location>
</feature>
<feature type="sequence variant" id="VAR_038892" description="In BBS2; dbSNP:rs532361142." evidence="6">
    <original>R</original>
    <variation>H</variation>
    <location>
        <position position="643"/>
    </location>
</feature>
<feature type="sequence conflict" description="In Ref. 2; BAB55252." evidence="21" ref="2">
    <original>E</original>
    <variation>G</variation>
    <location>
        <position position="63"/>
    </location>
</feature>
<feature type="sequence conflict" description="In Ref. 2; BAB55252." evidence="21" ref="2">
    <original>C</original>
    <variation>R</variation>
    <location>
        <position position="169"/>
    </location>
</feature>
<feature type="sequence conflict" description="In Ref. 2; BAB55252." evidence="21" ref="2">
    <original>L</original>
    <variation>S</variation>
    <location>
        <position position="457"/>
    </location>
</feature>
<feature type="sequence conflict" description="In Ref. 2; BAB55252." evidence="21" ref="2">
    <original>Y</original>
    <variation>H</variation>
    <location>
        <position position="648"/>
    </location>
</feature>
<organism>
    <name type="scientific">Homo sapiens</name>
    <name type="common">Human</name>
    <dbReference type="NCBI Taxonomy" id="9606"/>
    <lineage>
        <taxon>Eukaryota</taxon>
        <taxon>Metazoa</taxon>
        <taxon>Chordata</taxon>
        <taxon>Craniata</taxon>
        <taxon>Vertebrata</taxon>
        <taxon>Euteleostomi</taxon>
        <taxon>Mammalia</taxon>
        <taxon>Eutheria</taxon>
        <taxon>Euarchontoglires</taxon>
        <taxon>Primates</taxon>
        <taxon>Haplorrhini</taxon>
        <taxon>Catarrhini</taxon>
        <taxon>Hominidae</taxon>
        <taxon>Homo</taxon>
    </lineage>
</organism>
<gene>
    <name evidence="22" type="primary">BBS2</name>
</gene>
<proteinExistence type="evidence at protein level"/>
<evidence type="ECO:0000255" key="1"/>
<evidence type="ECO:0000269" key="2">
    <source>
    </source>
</evidence>
<evidence type="ECO:0000269" key="3">
    <source>
    </source>
</evidence>
<evidence type="ECO:0000269" key="4">
    <source>
    </source>
</evidence>
<evidence type="ECO:0000269" key="5">
    <source>
    </source>
</evidence>
<evidence type="ECO:0000269" key="6">
    <source>
    </source>
</evidence>
<evidence type="ECO:0000269" key="7">
    <source>
    </source>
</evidence>
<evidence type="ECO:0000269" key="8">
    <source>
    </source>
</evidence>
<evidence type="ECO:0000269" key="9">
    <source>
    </source>
</evidence>
<evidence type="ECO:0000269" key="10">
    <source>
    </source>
</evidence>
<evidence type="ECO:0000269" key="11">
    <source>
    </source>
</evidence>
<evidence type="ECO:0000269" key="12">
    <source>
    </source>
</evidence>
<evidence type="ECO:0000269" key="13">
    <source>
    </source>
</evidence>
<evidence type="ECO:0000269" key="14">
    <source>
    </source>
</evidence>
<evidence type="ECO:0000269" key="15">
    <source>
    </source>
</evidence>
<evidence type="ECO:0000269" key="16">
    <source>
    </source>
</evidence>
<evidence type="ECO:0000269" key="17">
    <source>
    </source>
</evidence>
<evidence type="ECO:0000269" key="18">
    <source>
    </source>
</evidence>
<evidence type="ECO:0000269" key="19">
    <source>
    </source>
</evidence>
<evidence type="ECO:0000269" key="20">
    <source>
    </source>
</evidence>
<evidence type="ECO:0000305" key="21"/>
<evidence type="ECO:0000312" key="22">
    <source>
        <dbReference type="HGNC" id="HGNC:967"/>
    </source>
</evidence>
<protein>
    <recommendedName>
        <fullName evidence="21">BBSome complex member BBS2</fullName>
    </recommendedName>
    <alternativeName>
        <fullName evidence="21">Bardet-Biedl syndrome 2 protein</fullName>
    </alternativeName>
</protein>
<dbReference type="EMBL" id="AF342736">
    <property type="protein sequence ID" value="AAK28552.1"/>
    <property type="molecule type" value="mRNA"/>
</dbReference>
<dbReference type="EMBL" id="AK027635">
    <property type="protein sequence ID" value="BAB55252.1"/>
    <property type="molecule type" value="mRNA"/>
</dbReference>
<dbReference type="EMBL" id="BC014140">
    <property type="protein sequence ID" value="AAH14140.1"/>
    <property type="molecule type" value="mRNA"/>
</dbReference>
<dbReference type="CCDS" id="CCDS32451.1"/>
<dbReference type="RefSeq" id="NP_001364385.1">
    <property type="nucleotide sequence ID" value="NM_001377456.1"/>
</dbReference>
<dbReference type="RefSeq" id="NP_114091.3">
    <property type="nucleotide sequence ID" value="NM_031885.3"/>
</dbReference>
<dbReference type="RefSeq" id="XP_005256137.1">
    <property type="nucleotide sequence ID" value="XM_005256080.2"/>
</dbReference>
<dbReference type="SMR" id="Q9BXC9"/>
<dbReference type="BioGRID" id="107059">
    <property type="interactions" value="78"/>
</dbReference>
<dbReference type="ComplexPortal" id="CPX-1908">
    <property type="entry name" value="BBSome complex"/>
</dbReference>
<dbReference type="CORUM" id="Q9BXC9"/>
<dbReference type="DIP" id="DIP-46563N"/>
<dbReference type="FunCoup" id="Q9BXC9">
    <property type="interactions" value="654"/>
</dbReference>
<dbReference type="IntAct" id="Q9BXC9">
    <property type="interactions" value="60"/>
</dbReference>
<dbReference type="STRING" id="9606.ENSP00000245157"/>
<dbReference type="TCDB" id="3.A.33.1.1">
    <property type="family name" value="the bbsome complex (bbsome) family"/>
</dbReference>
<dbReference type="GlyCosmos" id="Q9BXC9">
    <property type="glycosylation" value="1 site, 1 glycan"/>
</dbReference>
<dbReference type="GlyGen" id="Q9BXC9">
    <property type="glycosylation" value="1 site, 1 O-linked glycan (1 site)"/>
</dbReference>
<dbReference type="iPTMnet" id="Q9BXC9"/>
<dbReference type="MetOSite" id="Q9BXC9"/>
<dbReference type="PhosphoSitePlus" id="Q9BXC9"/>
<dbReference type="BioMuta" id="BBS2"/>
<dbReference type="DMDM" id="20454827"/>
<dbReference type="jPOST" id="Q9BXC9"/>
<dbReference type="MassIVE" id="Q9BXC9"/>
<dbReference type="PaxDb" id="9606-ENSP00000245157"/>
<dbReference type="PeptideAtlas" id="Q9BXC9"/>
<dbReference type="ProteomicsDB" id="79404"/>
<dbReference type="Pumba" id="Q9BXC9"/>
<dbReference type="Antibodypedia" id="28577">
    <property type="antibodies" value="119 antibodies from 23 providers"/>
</dbReference>
<dbReference type="DNASU" id="583"/>
<dbReference type="Ensembl" id="ENST00000245157.11">
    <property type="protein sequence ID" value="ENSP00000245157.5"/>
    <property type="gene ID" value="ENSG00000125124.14"/>
</dbReference>
<dbReference type="Ensembl" id="ENST00000682047.1">
    <property type="protein sequence ID" value="ENSP00000507699.1"/>
    <property type="gene ID" value="ENSG00000125124.14"/>
</dbReference>
<dbReference type="Ensembl" id="ENST00000682205.1">
    <property type="protein sequence ID" value="ENSP00000508377.1"/>
    <property type="gene ID" value="ENSG00000125124.14"/>
</dbReference>
<dbReference type="Ensembl" id="ENST00000682470.1">
    <property type="protein sequence ID" value="ENSP00000507654.1"/>
    <property type="gene ID" value="ENSG00000125124.14"/>
</dbReference>
<dbReference type="Ensembl" id="ENST00000682855.1">
    <property type="protein sequence ID" value="ENSP00000507027.1"/>
    <property type="gene ID" value="ENSG00000125124.14"/>
</dbReference>
<dbReference type="GeneID" id="583"/>
<dbReference type="KEGG" id="hsa:583"/>
<dbReference type="MANE-Select" id="ENST00000245157.11">
    <property type="protein sequence ID" value="ENSP00000245157.5"/>
    <property type="RefSeq nucleotide sequence ID" value="NM_031885.5"/>
    <property type="RefSeq protein sequence ID" value="NP_114091.4"/>
</dbReference>
<dbReference type="UCSC" id="uc002ejd.3">
    <property type="organism name" value="human"/>
</dbReference>
<dbReference type="AGR" id="HGNC:967"/>
<dbReference type="CTD" id="583"/>
<dbReference type="DisGeNET" id="583"/>
<dbReference type="GeneCards" id="BBS2"/>
<dbReference type="GeneReviews" id="BBS2"/>
<dbReference type="HGNC" id="HGNC:967">
    <property type="gene designation" value="BBS2"/>
</dbReference>
<dbReference type="HPA" id="ENSG00000125124">
    <property type="expression patterns" value="Low tissue specificity"/>
</dbReference>
<dbReference type="MalaCards" id="BBS2"/>
<dbReference type="MIM" id="606151">
    <property type="type" value="gene"/>
</dbReference>
<dbReference type="MIM" id="615981">
    <property type="type" value="phenotype"/>
</dbReference>
<dbReference type="MIM" id="616562">
    <property type="type" value="phenotype"/>
</dbReference>
<dbReference type="neXtProt" id="NX_Q9BXC9"/>
<dbReference type="OpenTargets" id="ENSG00000125124"/>
<dbReference type="Orphanet" id="110">
    <property type="disease" value="Bardet-Biedl syndrome"/>
</dbReference>
<dbReference type="Orphanet" id="791">
    <property type="disease" value="Retinitis pigmentosa"/>
</dbReference>
<dbReference type="PharmGKB" id="PA25276"/>
<dbReference type="VEuPathDB" id="HostDB:ENSG00000125124"/>
<dbReference type="eggNOG" id="ENOG502QPWU">
    <property type="taxonomic scope" value="Eukaryota"/>
</dbReference>
<dbReference type="GeneTree" id="ENSGT00390000017113"/>
<dbReference type="InParanoid" id="Q9BXC9"/>
<dbReference type="OMA" id="MSDGANC"/>
<dbReference type="OrthoDB" id="2120021at2759"/>
<dbReference type="PAN-GO" id="Q9BXC9">
    <property type="GO annotations" value="6 GO annotations based on evolutionary models"/>
</dbReference>
<dbReference type="PhylomeDB" id="Q9BXC9"/>
<dbReference type="TreeFam" id="TF313236"/>
<dbReference type="PathwayCommons" id="Q9BXC9"/>
<dbReference type="Reactome" id="R-HSA-5620922">
    <property type="pathway name" value="BBSome-mediated cargo-targeting to cilium"/>
</dbReference>
<dbReference type="SignaLink" id="Q9BXC9"/>
<dbReference type="SIGNOR" id="Q9BXC9"/>
<dbReference type="BioGRID-ORCS" id="583">
    <property type="hits" value="13 hits in 1155 CRISPR screens"/>
</dbReference>
<dbReference type="ChiTaRS" id="BBS2">
    <property type="organism name" value="human"/>
</dbReference>
<dbReference type="GeneWiki" id="BBS2"/>
<dbReference type="GenomeRNAi" id="583"/>
<dbReference type="Pharos" id="Q9BXC9">
    <property type="development level" value="Tbio"/>
</dbReference>
<dbReference type="PRO" id="PR:Q9BXC9"/>
<dbReference type="Proteomes" id="UP000005640">
    <property type="component" value="Chromosome 16"/>
</dbReference>
<dbReference type="RNAct" id="Q9BXC9">
    <property type="molecule type" value="protein"/>
</dbReference>
<dbReference type="Bgee" id="ENSG00000125124">
    <property type="expression patterns" value="Expressed in adrenal tissue and 179 other cell types or tissues"/>
</dbReference>
<dbReference type="ExpressionAtlas" id="Q9BXC9">
    <property type="expression patterns" value="baseline and differential"/>
</dbReference>
<dbReference type="GO" id="GO:0034464">
    <property type="term" value="C:BBSome"/>
    <property type="evidence" value="ECO:0000314"/>
    <property type="project" value="UniProtKB"/>
</dbReference>
<dbReference type="GO" id="GO:0034451">
    <property type="term" value="C:centriolar satellite"/>
    <property type="evidence" value="ECO:0007669"/>
    <property type="project" value="UniProtKB-SubCell"/>
</dbReference>
<dbReference type="GO" id="GO:0036064">
    <property type="term" value="C:ciliary basal body"/>
    <property type="evidence" value="ECO:0000314"/>
    <property type="project" value="BHF-UCL"/>
</dbReference>
<dbReference type="GO" id="GO:0060170">
    <property type="term" value="C:ciliary membrane"/>
    <property type="evidence" value="ECO:0000314"/>
    <property type="project" value="ComplexPortal"/>
</dbReference>
<dbReference type="GO" id="GO:0005829">
    <property type="term" value="C:cytosol"/>
    <property type="evidence" value="ECO:0000304"/>
    <property type="project" value="Reactome"/>
</dbReference>
<dbReference type="GO" id="GO:0016020">
    <property type="term" value="C:membrane"/>
    <property type="evidence" value="ECO:0000318"/>
    <property type="project" value="GO_Central"/>
</dbReference>
<dbReference type="GO" id="GO:0005902">
    <property type="term" value="C:microvillus"/>
    <property type="evidence" value="ECO:0007669"/>
    <property type="project" value="Ensembl"/>
</dbReference>
<dbReference type="GO" id="GO:0031514">
    <property type="term" value="C:motile cilium"/>
    <property type="evidence" value="ECO:0000314"/>
    <property type="project" value="BHF-UCL"/>
</dbReference>
<dbReference type="GO" id="GO:0043005">
    <property type="term" value="C:neuron projection"/>
    <property type="evidence" value="ECO:0000318"/>
    <property type="project" value="GO_Central"/>
</dbReference>
<dbReference type="GO" id="GO:0032420">
    <property type="term" value="C:stereocilium"/>
    <property type="evidence" value="ECO:0007669"/>
    <property type="project" value="Ensembl"/>
</dbReference>
<dbReference type="GO" id="GO:0061629">
    <property type="term" value="F:RNA polymerase II-specific DNA-binding transcription factor binding"/>
    <property type="evidence" value="ECO:0000353"/>
    <property type="project" value="MGI"/>
</dbReference>
<dbReference type="GO" id="GO:0030534">
    <property type="term" value="P:adult behavior"/>
    <property type="evidence" value="ECO:0000250"/>
    <property type="project" value="BHF-UCL"/>
</dbReference>
<dbReference type="GO" id="GO:0014824">
    <property type="term" value="P:artery smooth muscle contraction"/>
    <property type="evidence" value="ECO:0007669"/>
    <property type="project" value="Ensembl"/>
</dbReference>
<dbReference type="GO" id="GO:0048854">
    <property type="term" value="P:brain morphogenesis"/>
    <property type="evidence" value="ECO:0000250"/>
    <property type="project" value="BHF-UCL"/>
</dbReference>
<dbReference type="GO" id="GO:0051216">
    <property type="term" value="P:cartilage development"/>
    <property type="evidence" value="ECO:0007669"/>
    <property type="project" value="Ensembl"/>
</dbReference>
<dbReference type="GO" id="GO:0021987">
    <property type="term" value="P:cerebral cortex development"/>
    <property type="evidence" value="ECO:0000250"/>
    <property type="project" value="BHF-UCL"/>
</dbReference>
<dbReference type="GO" id="GO:0060271">
    <property type="term" value="P:cilium assembly"/>
    <property type="evidence" value="ECO:0000250"/>
    <property type="project" value="BHF-UCL"/>
</dbReference>
<dbReference type="GO" id="GO:0045444">
    <property type="term" value="P:fat cell differentiation"/>
    <property type="evidence" value="ECO:0000250"/>
    <property type="project" value="BHF-UCL"/>
</dbReference>
<dbReference type="GO" id="GO:0010467">
    <property type="term" value="P:gene expression"/>
    <property type="evidence" value="ECO:0007669"/>
    <property type="project" value="Ensembl"/>
</dbReference>
<dbReference type="GO" id="GO:0043001">
    <property type="term" value="P:Golgi to plasma membrane protein transport"/>
    <property type="evidence" value="ECO:0000315"/>
    <property type="project" value="MGI"/>
</dbReference>
<dbReference type="GO" id="GO:0021766">
    <property type="term" value="P:hippocampus development"/>
    <property type="evidence" value="ECO:0000250"/>
    <property type="project" value="BHF-UCL"/>
</dbReference>
<dbReference type="GO" id="GO:0032402">
    <property type="term" value="P:melanosome transport"/>
    <property type="evidence" value="ECO:0000250"/>
    <property type="project" value="BHF-UCL"/>
</dbReference>
<dbReference type="GO" id="GO:0038108">
    <property type="term" value="P:negative regulation of appetite by leptin-mediated signaling pathway"/>
    <property type="evidence" value="ECO:0000250"/>
    <property type="project" value="BHF-UCL"/>
</dbReference>
<dbReference type="GO" id="GO:0010629">
    <property type="term" value="P:negative regulation of gene expression"/>
    <property type="evidence" value="ECO:0007669"/>
    <property type="project" value="Ensembl"/>
</dbReference>
<dbReference type="GO" id="GO:0040015">
    <property type="term" value="P:negative regulation of multicellular organism growth"/>
    <property type="evidence" value="ECO:0000250"/>
    <property type="project" value="BHF-UCL"/>
</dbReference>
<dbReference type="GO" id="GO:1905515">
    <property type="term" value="P:non-motile cilium assembly"/>
    <property type="evidence" value="ECO:0007669"/>
    <property type="project" value="Ensembl"/>
</dbReference>
<dbReference type="GO" id="GO:0045494">
    <property type="term" value="P:photoreceptor cell maintenance"/>
    <property type="evidence" value="ECO:0000250"/>
    <property type="project" value="BHF-UCL"/>
</dbReference>
<dbReference type="GO" id="GO:0040018">
    <property type="term" value="P:positive regulation of multicellular organism growth"/>
    <property type="evidence" value="ECO:0007669"/>
    <property type="project" value="Ensembl"/>
</dbReference>
<dbReference type="GO" id="GO:0008104">
    <property type="term" value="P:protein localization"/>
    <property type="evidence" value="ECO:0000250"/>
    <property type="project" value="BHF-UCL"/>
</dbReference>
<dbReference type="GO" id="GO:0033365">
    <property type="term" value="P:protein localization to organelle"/>
    <property type="evidence" value="ECO:0000250"/>
    <property type="project" value="BHF-UCL"/>
</dbReference>
<dbReference type="GO" id="GO:0060296">
    <property type="term" value="P:regulation of cilium beat frequency involved in ciliary motility"/>
    <property type="evidence" value="ECO:0000250"/>
    <property type="project" value="BHF-UCL"/>
</dbReference>
<dbReference type="GO" id="GO:0007288">
    <property type="term" value="P:sperm axoneme assembly"/>
    <property type="evidence" value="ECO:0000250"/>
    <property type="project" value="BHF-UCL"/>
</dbReference>
<dbReference type="GO" id="GO:0021756">
    <property type="term" value="P:striatum development"/>
    <property type="evidence" value="ECO:0000250"/>
    <property type="project" value="BHF-UCL"/>
</dbReference>
<dbReference type="GO" id="GO:0042311">
    <property type="term" value="P:vasodilation"/>
    <property type="evidence" value="ECO:0007669"/>
    <property type="project" value="Ensembl"/>
</dbReference>
<dbReference type="GO" id="GO:0007601">
    <property type="term" value="P:visual perception"/>
    <property type="evidence" value="ECO:0000315"/>
    <property type="project" value="UniProtKB"/>
</dbReference>
<dbReference type="FunFam" id="2.130.10.10:FF:000967">
    <property type="entry name" value="Bardet-Biedl syndrome 2 protein homolog"/>
    <property type="match status" value="1"/>
</dbReference>
<dbReference type="Gene3D" id="2.130.10.10">
    <property type="entry name" value="YVTN repeat-like/Quinoprotein amine dehydrogenase"/>
    <property type="match status" value="1"/>
</dbReference>
<dbReference type="InterPro" id="IPR016616">
    <property type="entry name" value="Bardet-Biedl_syndrome_2_prot"/>
</dbReference>
<dbReference type="InterPro" id="IPR055381">
    <property type="entry name" value="BBS2_CtH_dom"/>
</dbReference>
<dbReference type="InterPro" id="IPR029333">
    <property type="entry name" value="BBS2_GAE_dom"/>
</dbReference>
<dbReference type="InterPro" id="IPR055380">
    <property type="entry name" value="BBS2_hp_dom"/>
</dbReference>
<dbReference type="InterPro" id="IPR029429">
    <property type="entry name" value="BBS2_Mid"/>
</dbReference>
<dbReference type="InterPro" id="IPR029430">
    <property type="entry name" value="BBS2_N"/>
</dbReference>
<dbReference type="InterPro" id="IPR055379">
    <property type="entry name" value="BBS2_pf_dom"/>
</dbReference>
<dbReference type="InterPro" id="IPR015943">
    <property type="entry name" value="WD40/YVTN_repeat-like_dom_sf"/>
</dbReference>
<dbReference type="InterPro" id="IPR036322">
    <property type="entry name" value="WD40_repeat_dom_sf"/>
</dbReference>
<dbReference type="PANTHER" id="PTHR32465">
    <property type="entry name" value="BARDET-BIEDL SYNDROME 2 PROTEIN"/>
    <property type="match status" value="1"/>
</dbReference>
<dbReference type="PANTHER" id="PTHR32465:SF0">
    <property type="entry name" value="BARDET-BIEDL SYNDROME 2 PROTEIN"/>
    <property type="match status" value="1"/>
</dbReference>
<dbReference type="Pfam" id="PF23351">
    <property type="entry name" value="BBS2_CtH"/>
    <property type="match status" value="1"/>
</dbReference>
<dbReference type="Pfam" id="PF14782">
    <property type="entry name" value="BBS2_GAE"/>
    <property type="match status" value="1"/>
</dbReference>
<dbReference type="Pfam" id="PF23353">
    <property type="entry name" value="BBS2_hp"/>
    <property type="match status" value="1"/>
</dbReference>
<dbReference type="Pfam" id="PF14783">
    <property type="entry name" value="BBS2_Mid"/>
    <property type="match status" value="1"/>
</dbReference>
<dbReference type="Pfam" id="PF14781">
    <property type="entry name" value="BBS2_N"/>
    <property type="match status" value="1"/>
</dbReference>
<dbReference type="Pfam" id="PF23350">
    <property type="entry name" value="BBS2_pf"/>
    <property type="match status" value="1"/>
</dbReference>
<dbReference type="PIRSF" id="PIRSF013684">
    <property type="entry name" value="BBS2"/>
    <property type="match status" value="1"/>
</dbReference>
<dbReference type="SUPFAM" id="SSF50978">
    <property type="entry name" value="WD40 repeat-like"/>
    <property type="match status" value="1"/>
</dbReference>
<sequence>MLLPVFTLKLRHKISPRMVAIGRYDGTHPCLAAATQTGKVFIHNPHTRNQHVSASRVFQSPLESDVSLLSINQAVSCLTAGVLNPELGYDALLVGTQTNLLAYDVYNNSDLFYREVADGANAIVLGTLGDISSPLAIIGGNCALQGFNHEGSDLFWTVTGDNVNSLALCDFDGDGKKELLVGSEDFDIRVFKEDEIVAEMTETEIVTSLCPMYGSRFGYALSNGTVGVYDKTSRYWRIKSKNHAMSIHAFDLNSDGVNELITGWSNGKVDARSDRTGEVIFKDNFSSAIAGVVEGDYRMDGHIQLICCSVDGEIRGYLPGTAEMRGNLMDTSAEQDLIRELSQKKQNLLLELRNYEENAKAELASPLNEADGHRGIIPANTRLHTTLSVSLGNETQTAHTELRISTSNDTIIRAVLIFAEGIFTGESHVVHPSIHNLSSSICIPIVPPKDVPVDLHLKAFVGYRSSTQFHVFESTRQLPRFSMYALTSLDPASEPISYVNFTIAERAQRVVVWLGQNFLLPEDTHIQNAPFQVCFTSLRNGGHLHIKIKLSGEITINTDDIDLAGDIIQSMASFFAIEDLQVEADFPVYFEELRKVLVKVDEYHSVHQKLSADMADHSNLIRSLLVGAEDARLMRDMKTMKSRYMELYDLNRDLLNGYKIRCNNHTELLGNLKAVNQAIQRAGRLRVGKPKNQVITACRDAIRSNNINTLFKIMRVGTASS</sequence>
<keyword id="KW-0083">Bardet-Biedl syndrome</keyword>
<keyword id="KW-1003">Cell membrane</keyword>
<keyword id="KW-0966">Cell projection</keyword>
<keyword id="KW-1186">Ciliopathy</keyword>
<keyword id="KW-0969">Cilium</keyword>
<keyword id="KW-0970">Cilium biogenesis/degradation</keyword>
<keyword id="KW-0175">Coiled coil</keyword>
<keyword id="KW-0963">Cytoplasm</keyword>
<keyword id="KW-0206">Cytoskeleton</keyword>
<keyword id="KW-0225">Disease variant</keyword>
<keyword id="KW-0991">Intellectual disability</keyword>
<keyword id="KW-0472">Membrane</keyword>
<keyword id="KW-0550">Obesity</keyword>
<keyword id="KW-0653">Protein transport</keyword>
<keyword id="KW-1267">Proteomics identification</keyword>
<keyword id="KW-1185">Reference proteome</keyword>
<keyword id="KW-0682">Retinitis pigmentosa</keyword>
<keyword id="KW-0716">Sensory transduction</keyword>
<keyword id="KW-0813">Transport</keyword>
<keyword id="KW-0844">Vision</keyword>
<accession>Q9BXC9</accession>
<accession>Q96CM0</accession>
<accession>Q96SN9</accession>
<reference key="1">
    <citation type="journal article" date="2001" name="Hum. Mol. Genet.">
        <title>Positional cloning of a novel gene on chromosome 16q causing Bardet-Biedl syndrome (BBS2).</title>
        <authorList>
            <person name="Nishimura D.Y."/>
            <person name="Searby C.C."/>
            <person name="Carmi R."/>
            <person name="Elbedour K."/>
            <person name="Van Maldergem L."/>
            <person name="Fulton A.B."/>
            <person name="Lam B.L."/>
            <person name="Powell B.R."/>
            <person name="Swiderski R.E."/>
            <person name="Bugge K.E."/>
            <person name="Haider N.B."/>
            <person name="Kwitek-Black A.E."/>
            <person name="Ying L."/>
            <person name="Duhl D.M."/>
            <person name="Gorman S.M."/>
            <person name="Heon E."/>
            <person name="Iannaccone A."/>
            <person name="Bonneau D."/>
            <person name="Biesecker L.G."/>
            <person name="Jacobson S.G."/>
            <person name="Stone E.M."/>
            <person name="Sheffield V.C."/>
        </authorList>
    </citation>
    <scope>NUCLEOTIDE SEQUENCE [MRNA]</scope>
    <scope>VARIANT BBS2 GLY-75</scope>
    <scope>VARIANTS ASN-70 AND VAL-123</scope>
</reference>
<reference key="2">
    <citation type="journal article" date="2004" name="Nat. Genet.">
        <title>Complete sequencing and characterization of 21,243 full-length human cDNAs.</title>
        <authorList>
            <person name="Ota T."/>
            <person name="Suzuki Y."/>
            <person name="Nishikawa T."/>
            <person name="Otsuki T."/>
            <person name="Sugiyama T."/>
            <person name="Irie R."/>
            <person name="Wakamatsu A."/>
            <person name="Hayashi K."/>
            <person name="Sato H."/>
            <person name="Nagai K."/>
            <person name="Kimura K."/>
            <person name="Makita H."/>
            <person name="Sekine M."/>
            <person name="Obayashi M."/>
            <person name="Nishi T."/>
            <person name="Shibahara T."/>
            <person name="Tanaka T."/>
            <person name="Ishii S."/>
            <person name="Yamamoto J."/>
            <person name="Saito K."/>
            <person name="Kawai Y."/>
            <person name="Isono Y."/>
            <person name="Nakamura Y."/>
            <person name="Nagahari K."/>
            <person name="Murakami K."/>
            <person name="Yasuda T."/>
            <person name="Iwayanagi T."/>
            <person name="Wagatsuma M."/>
            <person name="Shiratori A."/>
            <person name="Sudo H."/>
            <person name="Hosoiri T."/>
            <person name="Kaku Y."/>
            <person name="Kodaira H."/>
            <person name="Kondo H."/>
            <person name="Sugawara M."/>
            <person name="Takahashi M."/>
            <person name="Kanda K."/>
            <person name="Yokoi T."/>
            <person name="Furuya T."/>
            <person name="Kikkawa E."/>
            <person name="Omura Y."/>
            <person name="Abe K."/>
            <person name="Kamihara K."/>
            <person name="Katsuta N."/>
            <person name="Sato K."/>
            <person name="Tanikawa M."/>
            <person name="Yamazaki M."/>
            <person name="Ninomiya K."/>
            <person name="Ishibashi T."/>
            <person name="Yamashita H."/>
            <person name="Murakawa K."/>
            <person name="Fujimori K."/>
            <person name="Tanai H."/>
            <person name="Kimata M."/>
            <person name="Watanabe M."/>
            <person name="Hiraoka S."/>
            <person name="Chiba Y."/>
            <person name="Ishida S."/>
            <person name="Ono Y."/>
            <person name="Takiguchi S."/>
            <person name="Watanabe S."/>
            <person name="Yosida M."/>
            <person name="Hotuta T."/>
            <person name="Kusano J."/>
            <person name="Kanehori K."/>
            <person name="Takahashi-Fujii A."/>
            <person name="Hara H."/>
            <person name="Tanase T.-O."/>
            <person name="Nomura Y."/>
            <person name="Togiya S."/>
            <person name="Komai F."/>
            <person name="Hara R."/>
            <person name="Takeuchi K."/>
            <person name="Arita M."/>
            <person name="Imose N."/>
            <person name="Musashino K."/>
            <person name="Yuuki H."/>
            <person name="Oshima A."/>
            <person name="Sasaki N."/>
            <person name="Aotsuka S."/>
            <person name="Yoshikawa Y."/>
            <person name="Matsunawa H."/>
            <person name="Ichihara T."/>
            <person name="Shiohata N."/>
            <person name="Sano S."/>
            <person name="Moriya S."/>
            <person name="Momiyama H."/>
            <person name="Satoh N."/>
            <person name="Takami S."/>
            <person name="Terashima Y."/>
            <person name="Suzuki O."/>
            <person name="Nakagawa S."/>
            <person name="Senoh A."/>
            <person name="Mizoguchi H."/>
            <person name="Goto Y."/>
            <person name="Shimizu F."/>
            <person name="Wakebe H."/>
            <person name="Hishigaki H."/>
            <person name="Watanabe T."/>
            <person name="Sugiyama A."/>
            <person name="Takemoto M."/>
            <person name="Kawakami B."/>
            <person name="Yamazaki M."/>
            <person name="Watanabe K."/>
            <person name="Kumagai A."/>
            <person name="Itakura S."/>
            <person name="Fukuzumi Y."/>
            <person name="Fujimori Y."/>
            <person name="Komiyama M."/>
            <person name="Tashiro H."/>
            <person name="Tanigami A."/>
            <person name="Fujiwara T."/>
            <person name="Ono T."/>
            <person name="Yamada K."/>
            <person name="Fujii Y."/>
            <person name="Ozaki K."/>
            <person name="Hirao M."/>
            <person name="Ohmori Y."/>
            <person name="Kawabata A."/>
            <person name="Hikiji T."/>
            <person name="Kobatake N."/>
            <person name="Inagaki H."/>
            <person name="Ikema Y."/>
            <person name="Okamoto S."/>
            <person name="Okitani R."/>
            <person name="Kawakami T."/>
            <person name="Noguchi S."/>
            <person name="Itoh T."/>
            <person name="Shigeta K."/>
            <person name="Senba T."/>
            <person name="Matsumura K."/>
            <person name="Nakajima Y."/>
            <person name="Mizuno T."/>
            <person name="Morinaga M."/>
            <person name="Sasaki M."/>
            <person name="Togashi T."/>
            <person name="Oyama M."/>
            <person name="Hata H."/>
            <person name="Watanabe M."/>
            <person name="Komatsu T."/>
            <person name="Mizushima-Sugano J."/>
            <person name="Satoh T."/>
            <person name="Shirai Y."/>
            <person name="Takahashi Y."/>
            <person name="Nakagawa K."/>
            <person name="Okumura K."/>
            <person name="Nagase T."/>
            <person name="Nomura N."/>
            <person name="Kikuchi H."/>
            <person name="Masuho Y."/>
            <person name="Yamashita R."/>
            <person name="Nakai K."/>
            <person name="Yada T."/>
            <person name="Nakamura Y."/>
            <person name="Ohara O."/>
            <person name="Isogai T."/>
            <person name="Sugano S."/>
        </authorList>
    </citation>
    <scope>NUCLEOTIDE SEQUENCE [LARGE SCALE MRNA]</scope>
    <scope>VARIANT ASN-70</scope>
</reference>
<reference key="3">
    <citation type="journal article" date="2004" name="Genome Res.">
        <title>The status, quality, and expansion of the NIH full-length cDNA project: the Mammalian Gene Collection (MGC).</title>
        <authorList>
            <consortium name="The MGC Project Team"/>
        </authorList>
    </citation>
    <scope>NUCLEOTIDE SEQUENCE [LARGE SCALE MRNA]</scope>
    <scope>VARIANTS ASN-70 AND VAL-122</scope>
    <source>
        <tissue>Placenta</tissue>
    </source>
</reference>
<reference key="4">
    <citation type="journal article" date="2006" name="Eur. J. Hum. Genet.">
        <title>Pitfalls of homozygosity mapping: an extended consanguineous Bardet-Biedl syndrome family with two mutant genes (BBS2, BBS10), three mutations, but no triallelism.</title>
        <authorList>
            <person name="Laurier V."/>
            <person name="Stoetzel C."/>
            <person name="Muller J."/>
            <person name="Thibault C."/>
            <person name="Corbani S."/>
            <person name="Jalkh N."/>
            <person name="Salem N."/>
            <person name="Chouery E."/>
            <person name="Poch O."/>
            <person name="Licaire S."/>
            <person name="Danse J.M."/>
            <person name="Amati-Bonneau P."/>
            <person name="Bonneau D."/>
            <person name="Megarbane A."/>
            <person name="Mandel J.L."/>
            <person name="Dollfus H."/>
        </authorList>
    </citation>
    <scope>INVOLVEMENT IN BBS2</scope>
    <scope>VARIANT BBS2 VAL-139</scope>
</reference>
<reference key="5">
    <citation type="journal article" date="2006" name="Nature">
        <title>Dissection of epistasis in oligogenic Bardet-Biedl syndrome.</title>
        <authorList>
            <person name="Badano J.L."/>
            <person name="Leitch C.C."/>
            <person name="Ansley S.J."/>
            <person name="May-Simera H."/>
            <person name="Lawson S."/>
            <person name="Lewis R.A."/>
            <person name="Beales P.L."/>
            <person name="Dietz H.C."/>
            <person name="Fisher S."/>
            <person name="Katsanis N."/>
        </authorList>
    </citation>
    <scope>INTERACTION WITH CCDC28B</scope>
</reference>
<reference key="6">
    <citation type="journal article" date="2007" name="Cell">
        <title>A core complex of BBS proteins cooperates with the GTPase Rab8 to promote ciliary membrane biogenesis.</title>
        <authorList>
            <person name="Nachury M.V."/>
            <person name="Loktev A.V."/>
            <person name="Zhang Q."/>
            <person name="Westlake C.J."/>
            <person name="Peraenen J."/>
            <person name="Merdes A."/>
            <person name="Slusarski D.C."/>
            <person name="Scheller R.H."/>
            <person name="Bazan J.F."/>
            <person name="Sheffield V.C."/>
            <person name="Jackson P.K."/>
        </authorList>
    </citation>
    <scope>IDENTIFICATION BY MASS SPECTROMETRY</scope>
    <scope>SUBUNIT</scope>
    <scope>FUNCTION</scope>
    <scope>SUBCELLULAR LOCATION</scope>
</reference>
<reference key="7">
    <citation type="journal article" date="2008" name="Cell Motil. Cytoskeleton">
        <title>Novel interaction partners of Bardet-Biedl syndrome proteins.</title>
        <authorList>
            <person name="Oeffner F."/>
            <person name="Moch C."/>
            <person name="Neundorf A."/>
            <person name="Hofmann J."/>
            <person name="Koch M."/>
            <person name="Grzeschik K.H."/>
        </authorList>
    </citation>
    <scope>INTERACTION WITH ALDOB</scope>
</reference>
<reference key="8">
    <citation type="journal article" date="2010" name="Proc. Natl. Acad. Sci. U.S.A.">
        <title>BBS6, BBS10, and BBS12 form a complex with CCT/TRiC family chaperonins and mediate BBSome assembly.</title>
        <authorList>
            <person name="Seo S."/>
            <person name="Baye L.M."/>
            <person name="Schulz N.P."/>
            <person name="Beck J.S."/>
            <person name="Zhang Q."/>
            <person name="Slusarski D.C."/>
            <person name="Sheffield V.C."/>
        </authorList>
    </citation>
    <scope>INTERACTION WITH BBS7 AND MKKS</scope>
</reference>
<reference key="9">
    <citation type="journal article" date="2011" name="PLoS Genet.">
        <title>A novel protein LZTFL1 regulates ciliary trafficking of the BBSome and Smoothened.</title>
        <authorList>
            <person name="Seo S."/>
            <person name="Zhang Q."/>
            <person name="Bugge K."/>
            <person name="Breslow D.K."/>
            <person name="Searby C.C."/>
            <person name="Nachury M.V."/>
            <person name="Sheffield V.C."/>
        </authorList>
    </citation>
    <scope>FUNCTION</scope>
    <scope>FUNCTION OF THE BBSOME COMPLEX</scope>
    <scope>IDENTIFICATION IN THE BBSOME COMPLEX</scope>
    <scope>SUBCELLULAR LOCATION</scope>
</reference>
<reference key="10">
    <citation type="journal article" date="2020" name="Sci. Rep.">
        <title>Dlec1 is required for spermatogenesis and male fertility in mice.</title>
        <authorList>
            <person name="Okitsu Y."/>
            <person name="Nagano M."/>
            <person name="Yamagata T."/>
            <person name="Ito C."/>
            <person name="Toshimori K."/>
            <person name="Dohra H."/>
            <person name="Fujii W."/>
            <person name="Yogo K."/>
        </authorList>
    </citation>
    <scope>INTERACTION WITH DLEC1</scope>
</reference>
<reference key="11">
    <citation type="journal article" date="2015" name="JAMA Ophthalmol.">
        <title>Association between missense mutations in the BBS2 gene and nonsyndromic retinitis pigmentosa.</title>
        <authorList>
            <person name="Shevach E."/>
            <person name="Ali M."/>
            <person name="Mizrahi-Meissonnier L."/>
            <person name="McKibbin M."/>
            <person name="El-Asrag M."/>
            <person name="Watson C.M."/>
            <person name="Inglehearn C.F."/>
            <person name="Ben-Yosef T."/>
            <person name="Blumenfeld A."/>
            <person name="Jalas C."/>
            <person name="Banin E."/>
            <person name="Sharon D."/>
        </authorList>
    </citation>
    <scope>INVOLVEMENT IN RP74</scope>
    <scope>VARIANTS RP74 ASP-33; ALA-104; ARG-134 AND PRO-632</scope>
</reference>
<reference key="12">
    <citation type="journal article" date="2001" name="Science">
        <title>Triallelic inheritance in Bardet-Biedl syndrome, a Mendelian recessive disorder.</title>
        <authorList>
            <person name="Katsanis N."/>
            <person name="Ansley S.J."/>
            <person name="Badano J.L."/>
            <person name="Eichers E.R."/>
            <person name="Lewis R.A."/>
            <person name="Hoskins B.E."/>
            <person name="Scambler P.J."/>
            <person name="Davidson W.S."/>
            <person name="Beales P.L."/>
            <person name="Lupski J.R."/>
        </authorList>
    </citation>
    <scope>VARIANTS BBS2 ALA-104; GLN-315; TRP-315; ILE-558 AND PRO-632</scope>
</reference>
<reference key="13">
    <citation type="journal article" date="2003" name="Am. J. Hum. Genet.">
        <title>Genetic interaction of BBS1 mutations with alleles at other BBS loci can result in non-Mendelian Bardet-Biedl syndrome.</title>
        <authorList>
            <person name="Beales P.L."/>
            <person name="Badano J.L."/>
            <person name="Ross A.J."/>
            <person name="Ansley S.J."/>
            <person name="Hoskins B.E."/>
            <person name="Kirsten B."/>
            <person name="Mein C.A."/>
            <person name="Froguel P."/>
            <person name="Scambler P.J."/>
            <person name="Lewis R.A."/>
            <person name="Lupski J.R."/>
            <person name="Katsanis N."/>
        </authorList>
    </citation>
    <scope>VARIANTS BBS2 GLN-315 AND TRP-349</scope>
</reference>
<reference key="14">
    <citation type="journal article" date="2003" name="Hum. Mutat.">
        <title>Evaluation of multiplex capillary heteroduplex analysis: a rapid and sensitive mutation screening technique.</title>
        <authorList>
            <person name="Hoskins B.E."/>
            <person name="Thorn A."/>
            <person name="Scambler P.J."/>
            <person name="Beales P.L."/>
        </authorList>
    </citation>
    <scope>VARIANT BBS2 GLU-174</scope>
</reference>
<reference key="15">
    <citation type="journal article" date="2003" name="J. Med. Genet.">
        <title>Further support for digenic inheritance in Bardet-Biedl syndrome.</title>
        <authorList>
            <person name="Fauser S."/>
            <person name="Munz M."/>
            <person name="Besch D."/>
        </authorList>
    </citation>
    <scope>VARIANT BBS2 HIS-643</scope>
</reference>
<reference key="16">
    <citation type="journal article" date="2005" name="Am. J. Hum. Genet.">
        <title>Antenatal presentation of Bardet-Biedl syndrome may mimic Meckel syndrome.</title>
        <authorList>
            <person name="Karmous-Benailly H."/>
            <person name="Martinovic J."/>
            <person name="Gubler M.-C."/>
            <person name="Sirot Y."/>
            <person name="Clech L."/>
            <person name="Ozilou C."/>
            <person name="Auge J."/>
            <person name="Brahimi N."/>
            <person name="Etchevers H."/>
            <person name="Detrait E."/>
            <person name="Esculpavit C."/>
            <person name="Audollent S."/>
            <person name="Goudefroye G."/>
            <person name="Gonzales M."/>
            <person name="Tantau J."/>
            <person name="Loget P."/>
            <person name="Joubert M."/>
            <person name="Gaillard D."/>
            <person name="Jeanne-Pasquier C."/>
            <person name="Delezoide A.-L."/>
            <person name="Peter M.-O."/>
            <person name="Plessis G."/>
            <person name="Simon-Bouy B."/>
            <person name="Dollfus H."/>
            <person name="Le Merrer M."/>
            <person name="Munnich A."/>
            <person name="Encha-Razavi F."/>
            <person name="Vekemans M."/>
            <person name="Attie-Bitach T."/>
        </authorList>
    </citation>
    <scope>VARIANT BBS2 PRO-23</scope>
    <scope>VARIANT VAL-123</scope>
</reference>
<reference key="17">
    <citation type="journal article" date="2005" name="Eur. J. Hum. Genet.">
        <title>Testing for triallelism: analysis of six BBS genes in a Bardet-Biedl syndrome family cohort.</title>
        <authorList>
            <person name="Hichri H."/>
            <person name="Stoetzel C."/>
            <person name="Laurier V."/>
            <person name="Caron S."/>
            <person name="Sigaudy S."/>
            <person name="Sarda P."/>
            <person name="Hamel C."/>
            <person name="Martin-Coignard D."/>
            <person name="Gilles M."/>
            <person name="Leheup B."/>
            <person name="Holder M."/>
            <person name="Kaplan J."/>
            <person name="Bitoun P."/>
            <person name="Lacombe D."/>
            <person name="Verloes A."/>
            <person name="Bonneau D."/>
            <person name="Perrin-Schmitt F."/>
            <person name="Brandt C."/>
            <person name="Besancon A.-F."/>
            <person name="Mandel J.-L."/>
            <person name="Cossee M."/>
            <person name="Dollfus H."/>
        </authorList>
    </citation>
    <scope>VARIANT VAL-123</scope>
</reference>
<reference key="18">
    <citation type="journal article" date="2010" name="Hum. Mutat.">
        <title>Bardet-Biedl syndrome in Denmark -- report of 13 novel sequence variations in six genes.</title>
        <authorList>
            <person name="Hjortshoj T.D."/>
            <person name="Gronskov K."/>
            <person name="Philp A.R."/>
            <person name="Nishimura D.Y."/>
            <person name="Riise R."/>
            <person name="Sheffield V.C."/>
            <person name="Rosenberg T."/>
            <person name="Brondum-Nielsen K."/>
        </authorList>
    </citation>
    <scope>VARIANT LYS-629</scope>
</reference>
<reference key="19">
    <citation type="journal article" date="2011" name="Hum. Mutat.">
        <title>BBS genotype-phenotype assessment of a multiethnic patient cohort calls for a revision of the disease definition.</title>
        <authorList>
            <person name="Deveault C."/>
            <person name="Billingsley G."/>
            <person name="Duncan J.L."/>
            <person name="Bin J."/>
            <person name="Theal R."/>
            <person name="Vincent A."/>
            <person name="Fieggen K.J."/>
            <person name="Gerth C."/>
            <person name="Noordeh N."/>
            <person name="Traboulsi E.I."/>
            <person name="Fishman G.A."/>
            <person name="Chitayat D."/>
            <person name="Knueppel T."/>
            <person name="Millan J.M."/>
            <person name="Munier F.L."/>
            <person name="Kennedy D."/>
            <person name="Jacobson S.G."/>
            <person name="Innes A.M."/>
            <person name="Mitchell G.A."/>
            <person name="Boycott K."/>
            <person name="Heon E."/>
        </authorList>
    </citation>
    <scope>VARIANTS BBS2 CYS-81; ALA-104; ARG-125; PRO-136; TRP-307; CYS-317 AND PRO-632</scope>
</reference>
<name>BBS2_HUMAN</name>